<keyword id="KW-0030">Aminoacyl-tRNA synthetase</keyword>
<keyword id="KW-0067">ATP-binding</keyword>
<keyword id="KW-0963">Cytoplasm</keyword>
<keyword id="KW-0436">Ligase</keyword>
<keyword id="KW-0547">Nucleotide-binding</keyword>
<keyword id="KW-0648">Protein biosynthesis</keyword>
<keyword id="KW-1185">Reference proteome</keyword>
<feature type="chain" id="PRO_0000152753" description="Lysine--tRNA ligase">
    <location>
        <begin position="1"/>
        <end position="530"/>
    </location>
</feature>
<feature type="short sequence motif" description="'HIGH' region">
    <location>
        <begin position="28"/>
        <end position="36"/>
    </location>
</feature>
<feature type="short sequence motif" description="'KMSKS' region">
    <location>
        <begin position="278"/>
        <end position="282"/>
    </location>
</feature>
<comment type="catalytic activity">
    <reaction>
        <text>tRNA(Lys) + L-lysine + ATP = L-lysyl-tRNA(Lys) + AMP + diphosphate</text>
        <dbReference type="Rhea" id="RHEA:20792"/>
        <dbReference type="Rhea" id="RHEA-COMP:9696"/>
        <dbReference type="Rhea" id="RHEA-COMP:9697"/>
        <dbReference type="ChEBI" id="CHEBI:30616"/>
        <dbReference type="ChEBI" id="CHEBI:32551"/>
        <dbReference type="ChEBI" id="CHEBI:33019"/>
        <dbReference type="ChEBI" id="CHEBI:78442"/>
        <dbReference type="ChEBI" id="CHEBI:78529"/>
        <dbReference type="ChEBI" id="CHEBI:456215"/>
        <dbReference type="EC" id="6.1.1.6"/>
    </reaction>
</comment>
<comment type="subcellular location">
    <subcellularLocation>
        <location evidence="1">Cytoplasm</location>
    </subcellularLocation>
</comment>
<comment type="similarity">
    <text evidence="2">Belongs to the class-I aminoacyl-tRNA synthetase family.</text>
</comment>
<gene>
    <name type="primary">lysS</name>
    <name type="ordered locus">MJ0539</name>
</gene>
<reference key="1">
    <citation type="journal article" date="1996" name="Science">
        <title>Complete genome sequence of the methanogenic archaeon, Methanococcus jannaschii.</title>
        <authorList>
            <person name="Bult C.J."/>
            <person name="White O."/>
            <person name="Olsen G.J."/>
            <person name="Zhou L."/>
            <person name="Fleischmann R.D."/>
            <person name="Sutton G.G."/>
            <person name="Blake J.A."/>
            <person name="FitzGerald L.M."/>
            <person name="Clayton R.A."/>
            <person name="Gocayne J.D."/>
            <person name="Kerlavage A.R."/>
            <person name="Dougherty B.A."/>
            <person name="Tomb J.-F."/>
            <person name="Adams M.D."/>
            <person name="Reich C.I."/>
            <person name="Overbeek R."/>
            <person name="Kirkness E.F."/>
            <person name="Weinstock K.G."/>
            <person name="Merrick J.M."/>
            <person name="Glodek A."/>
            <person name="Scott J.L."/>
            <person name="Geoghagen N.S.M."/>
            <person name="Weidman J.F."/>
            <person name="Fuhrmann J.L."/>
            <person name="Nguyen D."/>
            <person name="Utterback T.R."/>
            <person name="Kelley J.M."/>
            <person name="Peterson J.D."/>
            <person name="Sadow P.W."/>
            <person name="Hanna M.C."/>
            <person name="Cotton M.D."/>
            <person name="Roberts K.M."/>
            <person name="Hurst M.A."/>
            <person name="Kaine B.P."/>
            <person name="Borodovsky M."/>
            <person name="Klenk H.-P."/>
            <person name="Fraser C.M."/>
            <person name="Smith H.O."/>
            <person name="Woese C.R."/>
            <person name="Venter J.C."/>
        </authorList>
    </citation>
    <scope>NUCLEOTIDE SEQUENCE [LARGE SCALE GENOMIC DNA]</scope>
    <source>
        <strain>ATCC 43067 / DSM 2661 / JAL-1 / JCM 10045 / NBRC 100440</strain>
    </source>
</reference>
<sequence>MHWADVIAEKLIEERKADKYIVASGITPSGHIHVGNARETLTADAIYKGLINKGVEAELIFIADTYDPLRKLYPFLPKEFEQYIGMPLSEIPCPEGCCESYAEHFLRPYLESLDDLGVELTTYRADENYKKGLYDEKIKIALDNREKIMEILNKFRANPLPDDWWPINIVCENCGKLKTKVIKYDSEKEEITYRCEICGFENTVKPYKGRAKLPWRVDWPARWSIFNVTIEPMGKDHAAAGGSYDTGVLIAKEIYNYIPPKKVVYEWIQLKVGDKAIPMSSSKGVVFAVKDWTNIAHPEILRFLLLRSKPTKHIDFDLKKIPDLVDEYDRLEDFYFNNKDKDELSEEEQEKIRIYELSTPKIPETKPFVIPYRFCSIIAQLTYDEEKEDINMERVFEILRRNNYSIDDIDEFSMKKLKDRLLMARNWALKYGEKLVIISEDEAKEIYEKLKDKQKEWIKYFAEKLKTAEFDALNLHELIYQTAKELGLNPRDAFQASYMILLGKKYGPKLGAFLATLGKDFVIRRYSLFE</sequence>
<evidence type="ECO:0000250" key="1"/>
<evidence type="ECO:0000305" key="2"/>
<dbReference type="EC" id="6.1.1.6"/>
<dbReference type="EMBL" id="L77117">
    <property type="protein sequence ID" value="AAB98532.1"/>
    <property type="molecule type" value="Genomic_DNA"/>
</dbReference>
<dbReference type="RefSeq" id="WP_010870043.1">
    <property type="nucleotide sequence ID" value="NC_000909.1"/>
</dbReference>
<dbReference type="SMR" id="Q57959"/>
<dbReference type="FunCoup" id="Q57959">
    <property type="interactions" value="28"/>
</dbReference>
<dbReference type="STRING" id="243232.MJ_0539"/>
<dbReference type="PaxDb" id="243232-MJ_0539"/>
<dbReference type="EnsemblBacteria" id="AAB98532">
    <property type="protein sequence ID" value="AAB98532"/>
    <property type="gene ID" value="MJ_0539"/>
</dbReference>
<dbReference type="GeneID" id="1451404"/>
<dbReference type="KEGG" id="mja:MJ_0539"/>
<dbReference type="eggNOG" id="arCOG00485">
    <property type="taxonomic scope" value="Archaea"/>
</dbReference>
<dbReference type="HOGENOM" id="CLU_025562_1_0_2"/>
<dbReference type="InParanoid" id="Q57959"/>
<dbReference type="OrthoDB" id="6838at2157"/>
<dbReference type="PhylomeDB" id="Q57959"/>
<dbReference type="Proteomes" id="UP000000805">
    <property type="component" value="Chromosome"/>
</dbReference>
<dbReference type="GO" id="GO:0005737">
    <property type="term" value="C:cytoplasm"/>
    <property type="evidence" value="ECO:0007669"/>
    <property type="project" value="UniProtKB-SubCell"/>
</dbReference>
<dbReference type="GO" id="GO:0005524">
    <property type="term" value="F:ATP binding"/>
    <property type="evidence" value="ECO:0007669"/>
    <property type="project" value="UniProtKB-UniRule"/>
</dbReference>
<dbReference type="GO" id="GO:0004824">
    <property type="term" value="F:lysine-tRNA ligase activity"/>
    <property type="evidence" value="ECO:0007669"/>
    <property type="project" value="UniProtKB-UniRule"/>
</dbReference>
<dbReference type="GO" id="GO:0000049">
    <property type="term" value="F:tRNA binding"/>
    <property type="evidence" value="ECO:0007669"/>
    <property type="project" value="InterPro"/>
</dbReference>
<dbReference type="GO" id="GO:0006430">
    <property type="term" value="P:lysyl-tRNA aminoacylation"/>
    <property type="evidence" value="ECO:0007669"/>
    <property type="project" value="UniProtKB-UniRule"/>
</dbReference>
<dbReference type="CDD" id="cd00674">
    <property type="entry name" value="LysRS_core_class_I"/>
    <property type="match status" value="1"/>
</dbReference>
<dbReference type="Gene3D" id="1.10.10.350">
    <property type="match status" value="1"/>
</dbReference>
<dbReference type="Gene3D" id="1.10.10.770">
    <property type="match status" value="1"/>
</dbReference>
<dbReference type="Gene3D" id="3.40.50.620">
    <property type="entry name" value="HUPs"/>
    <property type="match status" value="1"/>
</dbReference>
<dbReference type="Gene3D" id="6.10.20.10">
    <property type="entry name" value="Lysine tRNA ligase, stem contact fold domain"/>
    <property type="match status" value="1"/>
</dbReference>
<dbReference type="HAMAP" id="MF_00177">
    <property type="entry name" value="Lys_tRNA_synth_class1"/>
    <property type="match status" value="1"/>
</dbReference>
<dbReference type="InterPro" id="IPR045462">
    <property type="entry name" value="aa-tRNA-synth_I_cd-bd"/>
</dbReference>
<dbReference type="InterPro" id="IPR020751">
    <property type="entry name" value="aa-tRNA-synth_I_codon-bd_sub2"/>
</dbReference>
<dbReference type="InterPro" id="IPR001412">
    <property type="entry name" value="aa-tRNA-synth_I_CS"/>
</dbReference>
<dbReference type="InterPro" id="IPR008925">
    <property type="entry name" value="aa_tRNA-synth_I_cd-bd_sf"/>
</dbReference>
<dbReference type="InterPro" id="IPR002904">
    <property type="entry name" value="Lys-tRNA-ligase"/>
</dbReference>
<dbReference type="InterPro" id="IPR042078">
    <property type="entry name" value="Lys-tRNA-ligase_SC_fold"/>
</dbReference>
<dbReference type="InterPro" id="IPR014729">
    <property type="entry name" value="Rossmann-like_a/b/a_fold"/>
</dbReference>
<dbReference type="NCBIfam" id="TIGR00467">
    <property type="entry name" value="lysS_arch"/>
    <property type="match status" value="1"/>
</dbReference>
<dbReference type="PANTHER" id="PTHR37940">
    <property type="entry name" value="LYSINE--TRNA LIGASE"/>
    <property type="match status" value="1"/>
</dbReference>
<dbReference type="PANTHER" id="PTHR37940:SF1">
    <property type="entry name" value="LYSINE--TRNA LIGASE"/>
    <property type="match status" value="1"/>
</dbReference>
<dbReference type="Pfam" id="PF19269">
    <property type="entry name" value="Anticodon_2"/>
    <property type="match status" value="1"/>
</dbReference>
<dbReference type="Pfam" id="PF01921">
    <property type="entry name" value="tRNA-synt_1f"/>
    <property type="match status" value="1"/>
</dbReference>
<dbReference type="SUPFAM" id="SSF48163">
    <property type="entry name" value="An anticodon-binding domain of class I aminoacyl-tRNA synthetases"/>
    <property type="match status" value="1"/>
</dbReference>
<dbReference type="SUPFAM" id="SSF52374">
    <property type="entry name" value="Nucleotidylyl transferase"/>
    <property type="match status" value="1"/>
</dbReference>
<dbReference type="PROSITE" id="PS00178">
    <property type="entry name" value="AA_TRNA_LIGASE_I"/>
    <property type="match status" value="1"/>
</dbReference>
<protein>
    <recommendedName>
        <fullName>Lysine--tRNA ligase</fullName>
        <ecNumber>6.1.1.6</ecNumber>
    </recommendedName>
    <alternativeName>
        <fullName>Lysyl-tRNA synthetase</fullName>
        <shortName>LysRS</shortName>
    </alternativeName>
</protein>
<proteinExistence type="inferred from homology"/>
<name>SYK_METJA</name>
<organism>
    <name type="scientific">Methanocaldococcus jannaschii (strain ATCC 43067 / DSM 2661 / JAL-1 / JCM 10045 / NBRC 100440)</name>
    <name type="common">Methanococcus jannaschii</name>
    <dbReference type="NCBI Taxonomy" id="243232"/>
    <lineage>
        <taxon>Archaea</taxon>
        <taxon>Methanobacteriati</taxon>
        <taxon>Methanobacteriota</taxon>
        <taxon>Methanomada group</taxon>
        <taxon>Methanococci</taxon>
        <taxon>Methanococcales</taxon>
        <taxon>Methanocaldococcaceae</taxon>
        <taxon>Methanocaldococcus</taxon>
    </lineage>
</organism>
<accession>Q57959</accession>